<gene>
    <name type="primary">Snf8</name>
    <name type="synonym">D11Moh34</name>
</gene>
<reference key="1">
    <citation type="journal article" date="2005" name="Science">
        <title>The transcriptional landscape of the mammalian genome.</title>
        <authorList>
            <person name="Carninci P."/>
            <person name="Kasukawa T."/>
            <person name="Katayama S."/>
            <person name="Gough J."/>
            <person name="Frith M.C."/>
            <person name="Maeda N."/>
            <person name="Oyama R."/>
            <person name="Ravasi T."/>
            <person name="Lenhard B."/>
            <person name="Wells C."/>
            <person name="Kodzius R."/>
            <person name="Shimokawa K."/>
            <person name="Bajic V.B."/>
            <person name="Brenner S.E."/>
            <person name="Batalov S."/>
            <person name="Forrest A.R."/>
            <person name="Zavolan M."/>
            <person name="Davis M.J."/>
            <person name="Wilming L.G."/>
            <person name="Aidinis V."/>
            <person name="Allen J.E."/>
            <person name="Ambesi-Impiombato A."/>
            <person name="Apweiler R."/>
            <person name="Aturaliya R.N."/>
            <person name="Bailey T.L."/>
            <person name="Bansal M."/>
            <person name="Baxter L."/>
            <person name="Beisel K.W."/>
            <person name="Bersano T."/>
            <person name="Bono H."/>
            <person name="Chalk A.M."/>
            <person name="Chiu K.P."/>
            <person name="Choudhary V."/>
            <person name="Christoffels A."/>
            <person name="Clutterbuck D.R."/>
            <person name="Crowe M.L."/>
            <person name="Dalla E."/>
            <person name="Dalrymple B.P."/>
            <person name="de Bono B."/>
            <person name="Della Gatta G."/>
            <person name="di Bernardo D."/>
            <person name="Down T."/>
            <person name="Engstrom P."/>
            <person name="Fagiolini M."/>
            <person name="Faulkner G."/>
            <person name="Fletcher C.F."/>
            <person name="Fukushima T."/>
            <person name="Furuno M."/>
            <person name="Futaki S."/>
            <person name="Gariboldi M."/>
            <person name="Georgii-Hemming P."/>
            <person name="Gingeras T.R."/>
            <person name="Gojobori T."/>
            <person name="Green R.E."/>
            <person name="Gustincich S."/>
            <person name="Harbers M."/>
            <person name="Hayashi Y."/>
            <person name="Hensch T.K."/>
            <person name="Hirokawa N."/>
            <person name="Hill D."/>
            <person name="Huminiecki L."/>
            <person name="Iacono M."/>
            <person name="Ikeo K."/>
            <person name="Iwama A."/>
            <person name="Ishikawa T."/>
            <person name="Jakt M."/>
            <person name="Kanapin A."/>
            <person name="Katoh M."/>
            <person name="Kawasawa Y."/>
            <person name="Kelso J."/>
            <person name="Kitamura H."/>
            <person name="Kitano H."/>
            <person name="Kollias G."/>
            <person name="Krishnan S.P."/>
            <person name="Kruger A."/>
            <person name="Kummerfeld S.K."/>
            <person name="Kurochkin I.V."/>
            <person name="Lareau L.F."/>
            <person name="Lazarevic D."/>
            <person name="Lipovich L."/>
            <person name="Liu J."/>
            <person name="Liuni S."/>
            <person name="McWilliam S."/>
            <person name="Madan Babu M."/>
            <person name="Madera M."/>
            <person name="Marchionni L."/>
            <person name="Matsuda H."/>
            <person name="Matsuzawa S."/>
            <person name="Miki H."/>
            <person name="Mignone F."/>
            <person name="Miyake S."/>
            <person name="Morris K."/>
            <person name="Mottagui-Tabar S."/>
            <person name="Mulder N."/>
            <person name="Nakano N."/>
            <person name="Nakauchi H."/>
            <person name="Ng P."/>
            <person name="Nilsson R."/>
            <person name="Nishiguchi S."/>
            <person name="Nishikawa S."/>
            <person name="Nori F."/>
            <person name="Ohara O."/>
            <person name="Okazaki Y."/>
            <person name="Orlando V."/>
            <person name="Pang K.C."/>
            <person name="Pavan W.J."/>
            <person name="Pavesi G."/>
            <person name="Pesole G."/>
            <person name="Petrovsky N."/>
            <person name="Piazza S."/>
            <person name="Reed J."/>
            <person name="Reid J.F."/>
            <person name="Ring B.Z."/>
            <person name="Ringwald M."/>
            <person name="Rost B."/>
            <person name="Ruan Y."/>
            <person name="Salzberg S.L."/>
            <person name="Sandelin A."/>
            <person name="Schneider C."/>
            <person name="Schoenbach C."/>
            <person name="Sekiguchi K."/>
            <person name="Semple C.A."/>
            <person name="Seno S."/>
            <person name="Sessa L."/>
            <person name="Sheng Y."/>
            <person name="Shibata Y."/>
            <person name="Shimada H."/>
            <person name="Shimada K."/>
            <person name="Silva D."/>
            <person name="Sinclair B."/>
            <person name="Sperling S."/>
            <person name="Stupka E."/>
            <person name="Sugiura K."/>
            <person name="Sultana R."/>
            <person name="Takenaka Y."/>
            <person name="Taki K."/>
            <person name="Tammoja K."/>
            <person name="Tan S.L."/>
            <person name="Tang S."/>
            <person name="Taylor M.S."/>
            <person name="Tegner J."/>
            <person name="Teichmann S.A."/>
            <person name="Ueda H.R."/>
            <person name="van Nimwegen E."/>
            <person name="Verardo R."/>
            <person name="Wei C.L."/>
            <person name="Yagi K."/>
            <person name="Yamanishi H."/>
            <person name="Zabarovsky E."/>
            <person name="Zhu S."/>
            <person name="Zimmer A."/>
            <person name="Hide W."/>
            <person name="Bult C."/>
            <person name="Grimmond S.M."/>
            <person name="Teasdale R.D."/>
            <person name="Liu E.T."/>
            <person name="Brusic V."/>
            <person name="Quackenbush J."/>
            <person name="Wahlestedt C."/>
            <person name="Mattick J.S."/>
            <person name="Hume D.A."/>
            <person name="Kai C."/>
            <person name="Sasaki D."/>
            <person name="Tomaru Y."/>
            <person name="Fukuda S."/>
            <person name="Kanamori-Katayama M."/>
            <person name="Suzuki M."/>
            <person name="Aoki J."/>
            <person name="Arakawa T."/>
            <person name="Iida J."/>
            <person name="Imamura K."/>
            <person name="Itoh M."/>
            <person name="Kato T."/>
            <person name="Kawaji H."/>
            <person name="Kawagashira N."/>
            <person name="Kawashima T."/>
            <person name="Kojima M."/>
            <person name="Kondo S."/>
            <person name="Konno H."/>
            <person name="Nakano K."/>
            <person name="Ninomiya N."/>
            <person name="Nishio T."/>
            <person name="Okada M."/>
            <person name="Plessy C."/>
            <person name="Shibata K."/>
            <person name="Shiraki T."/>
            <person name="Suzuki S."/>
            <person name="Tagami M."/>
            <person name="Waki K."/>
            <person name="Watahiki A."/>
            <person name="Okamura-Oho Y."/>
            <person name="Suzuki H."/>
            <person name="Kawai J."/>
            <person name="Hayashizaki Y."/>
        </authorList>
    </citation>
    <scope>NUCLEOTIDE SEQUENCE [LARGE SCALE MRNA]</scope>
    <source>
        <strain>C57BL/6J</strain>
    </source>
</reference>
<reference key="2">
    <citation type="journal article" date="2009" name="PLoS Biol.">
        <title>Lineage-specific biology revealed by a finished genome assembly of the mouse.</title>
        <authorList>
            <person name="Church D.M."/>
            <person name="Goodstadt L."/>
            <person name="Hillier L.W."/>
            <person name="Zody M.C."/>
            <person name="Goldstein S."/>
            <person name="She X."/>
            <person name="Bult C.J."/>
            <person name="Agarwala R."/>
            <person name="Cherry J.L."/>
            <person name="DiCuccio M."/>
            <person name="Hlavina W."/>
            <person name="Kapustin Y."/>
            <person name="Meric P."/>
            <person name="Maglott D."/>
            <person name="Birtle Z."/>
            <person name="Marques A.C."/>
            <person name="Graves T."/>
            <person name="Zhou S."/>
            <person name="Teague B."/>
            <person name="Potamousis K."/>
            <person name="Churas C."/>
            <person name="Place M."/>
            <person name="Herschleb J."/>
            <person name="Runnheim R."/>
            <person name="Forrest D."/>
            <person name="Amos-Landgraf J."/>
            <person name="Schwartz D.C."/>
            <person name="Cheng Z."/>
            <person name="Lindblad-Toh K."/>
            <person name="Eichler E.E."/>
            <person name="Ponting C.P."/>
        </authorList>
    </citation>
    <scope>NUCLEOTIDE SEQUENCE [LARGE SCALE GENOMIC DNA]</scope>
    <source>
        <strain>C57BL/6J</strain>
    </source>
</reference>
<reference key="3">
    <citation type="journal article" date="2004" name="Genome Res.">
        <title>The status, quality, and expansion of the NIH full-length cDNA project: the Mammalian Gene Collection (MGC).</title>
        <authorList>
            <consortium name="The MGC Project Team"/>
        </authorList>
    </citation>
    <scope>NUCLEOTIDE SEQUENCE [LARGE SCALE MRNA]</scope>
    <source>
        <strain>FVB/N</strain>
        <tissue>Mammary tumor</tissue>
    </source>
</reference>
<reference key="4">
    <citation type="journal article" date="2010" name="Cell">
        <title>A tissue-specific atlas of mouse protein phosphorylation and expression.</title>
        <authorList>
            <person name="Huttlin E.L."/>
            <person name="Jedrychowski M.P."/>
            <person name="Elias J.E."/>
            <person name="Goswami T."/>
            <person name="Rad R."/>
            <person name="Beausoleil S.A."/>
            <person name="Villen J."/>
            <person name="Haas W."/>
            <person name="Sowa M.E."/>
            <person name="Gygi S.P."/>
        </authorList>
    </citation>
    <scope>IDENTIFICATION BY MASS SPECTROMETRY [LARGE SCALE ANALYSIS]</scope>
    <source>
        <tissue>Brain</tissue>
        <tissue>Heart</tissue>
        <tissue>Kidney</tissue>
        <tissue>Liver</tissue>
        <tissue>Lung</tissue>
        <tissue>Pancreas</tissue>
        <tissue>Spleen</tissue>
    </source>
</reference>
<keyword id="KW-0175">Coiled coil</keyword>
<keyword id="KW-0963">Cytoplasm</keyword>
<keyword id="KW-0967">Endosome</keyword>
<keyword id="KW-0472">Membrane</keyword>
<keyword id="KW-0488">Methylation</keyword>
<keyword id="KW-0539">Nucleus</keyword>
<keyword id="KW-0653">Protein transport</keyword>
<keyword id="KW-1185">Reference proteome</keyword>
<keyword id="KW-0804">Transcription</keyword>
<keyword id="KW-0805">Transcription regulation</keyword>
<keyword id="KW-0813">Transport</keyword>
<accession>Q9CZ28</accession>
<accession>A2A6M2</accession>
<protein>
    <recommendedName>
        <fullName>Vacuolar-sorting protein SNF8</fullName>
    </recommendedName>
    <alternativeName>
        <fullName>ESCRT-II complex subunit VPS22</fullName>
    </alternativeName>
</protein>
<dbReference type="EMBL" id="AK013058">
    <property type="protein sequence ID" value="BAB28626.1"/>
    <property type="molecule type" value="mRNA"/>
</dbReference>
<dbReference type="EMBL" id="AL603682">
    <property type="status" value="NOT_ANNOTATED_CDS"/>
    <property type="molecule type" value="Genomic_DNA"/>
</dbReference>
<dbReference type="EMBL" id="BC003938">
    <property type="protein sequence ID" value="AAH03938.1"/>
    <property type="molecule type" value="mRNA"/>
</dbReference>
<dbReference type="CCDS" id="CCDS25288.1"/>
<dbReference type="RefSeq" id="NP_291046.1">
    <property type="nucleotide sequence ID" value="NM_033568.4"/>
</dbReference>
<dbReference type="SMR" id="Q9CZ28"/>
<dbReference type="BioGRID" id="205435">
    <property type="interactions" value="10"/>
</dbReference>
<dbReference type="FunCoup" id="Q9CZ28">
    <property type="interactions" value="3087"/>
</dbReference>
<dbReference type="IntAct" id="Q9CZ28">
    <property type="interactions" value="4"/>
</dbReference>
<dbReference type="STRING" id="10090.ENSMUSP00000006217"/>
<dbReference type="iPTMnet" id="Q9CZ28"/>
<dbReference type="PhosphoSitePlus" id="Q9CZ28"/>
<dbReference type="PaxDb" id="10090-ENSMUSP00000006217"/>
<dbReference type="PeptideAtlas" id="Q9CZ28"/>
<dbReference type="ProteomicsDB" id="261289"/>
<dbReference type="Pumba" id="Q9CZ28"/>
<dbReference type="Antibodypedia" id="30335">
    <property type="antibodies" value="203 antibodies from 22 providers"/>
</dbReference>
<dbReference type="DNASU" id="27681"/>
<dbReference type="Ensembl" id="ENSMUST00000006217.10">
    <property type="protein sequence ID" value="ENSMUSP00000006217.4"/>
    <property type="gene ID" value="ENSMUSG00000006058.11"/>
</dbReference>
<dbReference type="GeneID" id="27681"/>
<dbReference type="KEGG" id="mmu:27681"/>
<dbReference type="UCSC" id="uc007lbb.1">
    <property type="organism name" value="mouse"/>
</dbReference>
<dbReference type="AGR" id="MGI:1343161"/>
<dbReference type="CTD" id="11267"/>
<dbReference type="MGI" id="MGI:1343161">
    <property type="gene designation" value="Snf8"/>
</dbReference>
<dbReference type="VEuPathDB" id="HostDB:ENSMUSG00000006058"/>
<dbReference type="eggNOG" id="KOG3341">
    <property type="taxonomic scope" value="Eukaryota"/>
</dbReference>
<dbReference type="GeneTree" id="ENSGT00390000007843"/>
<dbReference type="InParanoid" id="Q9CZ28"/>
<dbReference type="OMA" id="QIVEVCM"/>
<dbReference type="OrthoDB" id="283883at2759"/>
<dbReference type="PhylomeDB" id="Q9CZ28"/>
<dbReference type="TreeFam" id="TF105950"/>
<dbReference type="Reactome" id="R-MMU-917729">
    <property type="pathway name" value="Endosomal Sorting Complex Required For Transport (ESCRT)"/>
</dbReference>
<dbReference type="BioGRID-ORCS" id="27681">
    <property type="hits" value="26 hits in 80 CRISPR screens"/>
</dbReference>
<dbReference type="ChiTaRS" id="Snf8">
    <property type="organism name" value="mouse"/>
</dbReference>
<dbReference type="PRO" id="PR:Q9CZ28"/>
<dbReference type="Proteomes" id="UP000000589">
    <property type="component" value="Chromosome 11"/>
</dbReference>
<dbReference type="RNAct" id="Q9CZ28">
    <property type="molecule type" value="protein"/>
</dbReference>
<dbReference type="Bgee" id="ENSMUSG00000006058">
    <property type="expression patterns" value="Expressed in embryonic brain and 260 other cell types or tissues"/>
</dbReference>
<dbReference type="ExpressionAtlas" id="Q9CZ28">
    <property type="expression patterns" value="baseline and differential"/>
</dbReference>
<dbReference type="GO" id="GO:0005829">
    <property type="term" value="C:cytosol"/>
    <property type="evidence" value="ECO:0007669"/>
    <property type="project" value="Ensembl"/>
</dbReference>
<dbReference type="GO" id="GO:0000814">
    <property type="term" value="C:ESCRT II complex"/>
    <property type="evidence" value="ECO:0007669"/>
    <property type="project" value="Ensembl"/>
</dbReference>
<dbReference type="GO" id="GO:0031902">
    <property type="term" value="C:late endosome membrane"/>
    <property type="evidence" value="ECO:0007669"/>
    <property type="project" value="UniProtKB-SubCell"/>
</dbReference>
<dbReference type="GO" id="GO:0005654">
    <property type="term" value="C:nucleoplasm"/>
    <property type="evidence" value="ECO:0007669"/>
    <property type="project" value="Ensembl"/>
</dbReference>
<dbReference type="GO" id="GO:0048471">
    <property type="term" value="C:perinuclear region of cytoplasm"/>
    <property type="evidence" value="ECO:0007669"/>
    <property type="project" value="Ensembl"/>
</dbReference>
<dbReference type="GO" id="GO:0005886">
    <property type="term" value="C:plasma membrane"/>
    <property type="evidence" value="ECO:0007669"/>
    <property type="project" value="Ensembl"/>
</dbReference>
<dbReference type="GO" id="GO:0055037">
    <property type="term" value="C:recycling endosome"/>
    <property type="evidence" value="ECO:0007669"/>
    <property type="project" value="Ensembl"/>
</dbReference>
<dbReference type="GO" id="GO:0005667">
    <property type="term" value="C:transcription regulator complex"/>
    <property type="evidence" value="ECO:0000266"/>
    <property type="project" value="MGI"/>
</dbReference>
<dbReference type="GO" id="GO:0016247">
    <property type="term" value="F:channel regulator activity"/>
    <property type="evidence" value="ECO:0007669"/>
    <property type="project" value="Ensembl"/>
</dbReference>
<dbReference type="GO" id="GO:0008289">
    <property type="term" value="F:lipid binding"/>
    <property type="evidence" value="ECO:0007669"/>
    <property type="project" value="Ensembl"/>
</dbReference>
<dbReference type="GO" id="GO:0042803">
    <property type="term" value="F:protein homodimerization activity"/>
    <property type="evidence" value="ECO:0007669"/>
    <property type="project" value="Ensembl"/>
</dbReference>
<dbReference type="GO" id="GO:0045022">
    <property type="term" value="P:early endosome to late endosome transport"/>
    <property type="evidence" value="ECO:0007669"/>
    <property type="project" value="Ensembl"/>
</dbReference>
<dbReference type="GO" id="GO:0032456">
    <property type="term" value="P:endocytic recycling"/>
    <property type="evidence" value="ECO:0007669"/>
    <property type="project" value="Ensembl"/>
</dbReference>
<dbReference type="GO" id="GO:0016236">
    <property type="term" value="P:macroautophagy"/>
    <property type="evidence" value="ECO:0000250"/>
    <property type="project" value="UniProtKB"/>
</dbReference>
<dbReference type="GO" id="GO:0036258">
    <property type="term" value="P:multivesicular body assembly"/>
    <property type="evidence" value="ECO:0000250"/>
    <property type="project" value="UniProtKB"/>
</dbReference>
<dbReference type="GO" id="GO:0071985">
    <property type="term" value="P:multivesicular body sorting pathway"/>
    <property type="evidence" value="ECO:0000250"/>
    <property type="project" value="UniProtKB"/>
</dbReference>
<dbReference type="GO" id="GO:1903543">
    <property type="term" value="P:positive regulation of exosomal secretion"/>
    <property type="evidence" value="ECO:0007669"/>
    <property type="project" value="Ensembl"/>
</dbReference>
<dbReference type="GO" id="GO:0010628">
    <property type="term" value="P:positive regulation of gene expression"/>
    <property type="evidence" value="ECO:0007669"/>
    <property type="project" value="Ensembl"/>
</dbReference>
<dbReference type="GO" id="GO:0045732">
    <property type="term" value="P:positive regulation of protein catabolic process"/>
    <property type="evidence" value="ECO:0007669"/>
    <property type="project" value="Ensembl"/>
</dbReference>
<dbReference type="GO" id="GO:0015031">
    <property type="term" value="P:protein transport"/>
    <property type="evidence" value="ECO:0007669"/>
    <property type="project" value="UniProtKB-KW"/>
</dbReference>
<dbReference type="GO" id="GO:0061635">
    <property type="term" value="P:regulation of protein complex stability"/>
    <property type="evidence" value="ECO:0007669"/>
    <property type="project" value="Ensembl"/>
</dbReference>
<dbReference type="GO" id="GO:0006357">
    <property type="term" value="P:regulation of transcription by RNA polymerase II"/>
    <property type="evidence" value="ECO:0000266"/>
    <property type="project" value="MGI"/>
</dbReference>
<dbReference type="FunFam" id="1.10.10.10:FF:000085">
    <property type="entry name" value="Vacuolar-sorting protein SNF8"/>
    <property type="match status" value="1"/>
</dbReference>
<dbReference type="FunFam" id="1.10.10.10:FF:000234">
    <property type="entry name" value="Vacuolar-sorting protein SNF8"/>
    <property type="match status" value="1"/>
</dbReference>
<dbReference type="Gene3D" id="6.10.140.180">
    <property type="match status" value="1"/>
</dbReference>
<dbReference type="Gene3D" id="1.10.10.10">
    <property type="entry name" value="Winged helix-like DNA-binding domain superfamily/Winged helix DNA-binding domain"/>
    <property type="match status" value="2"/>
</dbReference>
<dbReference type="InterPro" id="IPR016689">
    <property type="entry name" value="ESCRT-2_cplx_Snf8"/>
</dbReference>
<dbReference type="InterPro" id="IPR040608">
    <property type="entry name" value="Snf8/Vps36"/>
</dbReference>
<dbReference type="InterPro" id="IPR036388">
    <property type="entry name" value="WH-like_DNA-bd_sf"/>
</dbReference>
<dbReference type="InterPro" id="IPR036390">
    <property type="entry name" value="WH_DNA-bd_sf"/>
</dbReference>
<dbReference type="PANTHER" id="PTHR12806">
    <property type="entry name" value="EAP30 SUBUNIT OF ELL COMPLEX"/>
    <property type="match status" value="1"/>
</dbReference>
<dbReference type="PANTHER" id="PTHR12806:SF0">
    <property type="entry name" value="VACUOLAR-SORTING PROTEIN SNF8"/>
    <property type="match status" value="1"/>
</dbReference>
<dbReference type="Pfam" id="PF04157">
    <property type="entry name" value="EAP30"/>
    <property type="match status" value="1"/>
</dbReference>
<dbReference type="PIRSF" id="PIRSF017215">
    <property type="entry name" value="ESCRT2_Vps22"/>
    <property type="match status" value="1"/>
</dbReference>
<dbReference type="SUPFAM" id="SSF46785">
    <property type="entry name" value="Winged helix' DNA-binding domain"/>
    <property type="match status" value="2"/>
</dbReference>
<proteinExistence type="evidence at protein level"/>
<sequence>MHRRGVGAGAIAKKKLAEAKYKERGTVLAEDQLAQMSKQLDMFKTNLEEFASKHKQEIRKNPEFRVQFQDMCATIGVDPLASGKGFWSEMLGVGDFYYELGVQIIEVCLALKHRNGGLITLEELHQQVLKGRGKFAQDVSQDDLIRAIKKLKALGTGFGIIPVGGTYLIQSVPAELNMDHTVVLQLAEKNGYVTVSEIKTSLKWETERARQVLEHLLKEGLAWLDLQAPGEAHYWLPALFTDLYSQEISAEEAKEAFP</sequence>
<feature type="chain" id="PRO_0000215210" description="Vacuolar-sorting protein SNF8">
    <location>
        <begin position="1"/>
        <end position="258"/>
    </location>
</feature>
<feature type="coiled-coil region" evidence="4">
    <location>
        <begin position="27"/>
        <end position="53"/>
    </location>
</feature>
<feature type="modified residue" description="Omega-N-methylarginine" evidence="3">
    <location>
        <position position="4"/>
    </location>
</feature>
<comment type="function">
    <text evidence="2 3">Component of the endosomal sorting complex required for transport II (ESCRT-II), which is required for multivesicular body (MVB) formation and sorting of endosomal cargo proteins into MVBs, and plays a role in autophagy. The MVB pathway mediates delivery of transmembrane proteins into the lumen of the lysosome for degradation. The ESCRT-II complex is probably involved in the recruitment of the ESCRT-III complex. The ESCRT-II complex may also play a role in transcription regulation by participating in derepression of transcription by RNA polymerase II, possibly via its interaction with ELL. Required for degradation of both endocytosed EGF and EGFR, but not for the EGFR ligand-mediated internalization. Required for the exosomal release of SDCBP, CD63 and syndecan (By similarity).</text>
</comment>
<comment type="subunit">
    <text evidence="3">Component of the endosomal sorting complex required for transport II (ESCRT-II), composed of SNF8, VPS25 and VPS36. SNF8 is essential for the stability of the ESCRT-II complex. ESCRT-II interacts with ELL. Interacts with TSG101 (via the C-terminal domain). Interacts with RILPL1 (via the N-terminal domain); which recruits ESCRT-II to the endosome membranes. Interacts with 14-3-3 proteins (By similarity).</text>
</comment>
<comment type="subcellular location">
    <subcellularLocation>
        <location evidence="1">Cytoplasm</location>
    </subcellularLocation>
    <subcellularLocation>
        <location evidence="1">Endosome membrane</location>
    </subcellularLocation>
    <subcellularLocation>
        <location evidence="5">Nucleus</location>
    </subcellularLocation>
    <subcellularLocation>
        <location evidence="1">Late endosome membrane</location>
    </subcellularLocation>
    <text evidence="1">Recruited to the endosome membrane to participate in vesicle formation.</text>
</comment>
<comment type="similarity">
    <text evidence="5">Belongs to the SNF8 family.</text>
</comment>
<evidence type="ECO:0000250" key="1"/>
<evidence type="ECO:0000250" key="2">
    <source>
        <dbReference type="UniProtKB" id="Q5U3V9"/>
    </source>
</evidence>
<evidence type="ECO:0000250" key="3">
    <source>
        <dbReference type="UniProtKB" id="Q96H20"/>
    </source>
</evidence>
<evidence type="ECO:0000255" key="4"/>
<evidence type="ECO:0000305" key="5"/>
<name>SNF8_MOUSE</name>
<organism>
    <name type="scientific">Mus musculus</name>
    <name type="common">Mouse</name>
    <dbReference type="NCBI Taxonomy" id="10090"/>
    <lineage>
        <taxon>Eukaryota</taxon>
        <taxon>Metazoa</taxon>
        <taxon>Chordata</taxon>
        <taxon>Craniata</taxon>
        <taxon>Vertebrata</taxon>
        <taxon>Euteleostomi</taxon>
        <taxon>Mammalia</taxon>
        <taxon>Eutheria</taxon>
        <taxon>Euarchontoglires</taxon>
        <taxon>Glires</taxon>
        <taxon>Rodentia</taxon>
        <taxon>Myomorpha</taxon>
        <taxon>Muroidea</taxon>
        <taxon>Muridae</taxon>
        <taxon>Murinae</taxon>
        <taxon>Mus</taxon>
        <taxon>Mus</taxon>
    </lineage>
</organism>